<proteinExistence type="inferred from homology"/>
<evidence type="ECO:0000255" key="1">
    <source>
        <dbReference type="HAMAP-Rule" id="MF_01390"/>
    </source>
</evidence>
<geneLocation type="chloroplast"/>
<name>MATK_PINPA</name>
<sequence length="515" mass="61033">MDEFHRCGKEDSFWQQCFLYPLFFQEDLYAISHDHYLDVSSSSRPMEHLSSNDQLSFLTVKRLIGQIRQQNHSIVLFVNCDPNPLADRKKSFYSESVLEALTLVLEVPFSIWSKYSVEGMNESKSFRSIHSIFPFLEDKFPHSNSILDARIPYSIHPEILVRTFRRWIRDAPSLHPLRSVLYEYRNSPDNLQRSIIVVPRVNTRFFLFLWNYYVCECESILFSRLKRSSHSRSLSHGSFPQRTHFHRKIKHIIIFSRRNSLKSIWSLKDPKIHYVRYGERPIIAIKGAHLLVKKCRYYLLIFRQFYFHLWSEPYRVCSHQLSKNCSSSPGYFLRVRMNPILVRTKMLDELFIADLITDEIDPIVPIVPIIGLLATEKFCDISGRPISKLSWTSLTDDDILDRFDQIWRNLFHYYSGSFDRDGLYRIKYILSLSCAKTLACKHKSTIRVVRKELGPELFKKSFSKEREFYSLRFSSKAAARSQRERIWHSDIPQINPLANSWQKIQDLKIENLFDQ</sequence>
<feature type="chain" id="PRO_0000143619" description="Maturase K">
    <location>
        <begin position="1"/>
        <end position="515"/>
    </location>
</feature>
<reference key="1">
    <citation type="submission" date="2002-03" db="EMBL/GenBank/DDBJ databases">
        <title>Phylogeny of the North American pines.</title>
        <authorList>
            <person name="Geada Lopez G."/>
            <person name="Kamiya K."/>
            <person name="Harada K."/>
        </authorList>
    </citation>
    <scope>NUCLEOTIDE SEQUENCE [GENOMIC DNA]</scope>
    <source>
        <tissue>Leaf</tissue>
    </source>
</reference>
<keyword id="KW-0150">Chloroplast</keyword>
<keyword id="KW-0507">mRNA processing</keyword>
<keyword id="KW-0934">Plastid</keyword>
<keyword id="KW-0694">RNA-binding</keyword>
<keyword id="KW-0819">tRNA processing</keyword>
<gene>
    <name evidence="1" type="primary">matK</name>
</gene>
<organism>
    <name type="scientific">Pinus palustris</name>
    <name type="common">Longleaf pine</name>
    <name type="synonym">Pinus longifolia</name>
    <dbReference type="NCBI Taxonomy" id="46836"/>
    <lineage>
        <taxon>Eukaryota</taxon>
        <taxon>Viridiplantae</taxon>
        <taxon>Streptophyta</taxon>
        <taxon>Embryophyta</taxon>
        <taxon>Tracheophyta</taxon>
        <taxon>Spermatophyta</taxon>
        <taxon>Pinopsida</taxon>
        <taxon>Pinidae</taxon>
        <taxon>Conifers I</taxon>
        <taxon>Pinales</taxon>
        <taxon>Pinaceae</taxon>
        <taxon>Pinus</taxon>
        <taxon>Pinus subgen. Pinus</taxon>
    </lineage>
</organism>
<protein>
    <recommendedName>
        <fullName evidence="1">Maturase K</fullName>
    </recommendedName>
    <alternativeName>
        <fullName evidence="1">Intron maturase</fullName>
    </alternativeName>
</protein>
<dbReference type="EMBL" id="AB080937">
    <property type="protein sequence ID" value="BAC11940.1"/>
    <property type="molecule type" value="Genomic_DNA"/>
</dbReference>
<dbReference type="GO" id="GO:0009507">
    <property type="term" value="C:chloroplast"/>
    <property type="evidence" value="ECO:0007669"/>
    <property type="project" value="UniProtKB-SubCell"/>
</dbReference>
<dbReference type="GO" id="GO:0003723">
    <property type="term" value="F:RNA binding"/>
    <property type="evidence" value="ECO:0007669"/>
    <property type="project" value="UniProtKB-KW"/>
</dbReference>
<dbReference type="GO" id="GO:0006397">
    <property type="term" value="P:mRNA processing"/>
    <property type="evidence" value="ECO:0007669"/>
    <property type="project" value="UniProtKB-KW"/>
</dbReference>
<dbReference type="GO" id="GO:0008380">
    <property type="term" value="P:RNA splicing"/>
    <property type="evidence" value="ECO:0007669"/>
    <property type="project" value="UniProtKB-UniRule"/>
</dbReference>
<dbReference type="GO" id="GO:0008033">
    <property type="term" value="P:tRNA processing"/>
    <property type="evidence" value="ECO:0007669"/>
    <property type="project" value="UniProtKB-KW"/>
</dbReference>
<dbReference type="HAMAP" id="MF_01390">
    <property type="entry name" value="MatK"/>
    <property type="match status" value="1"/>
</dbReference>
<dbReference type="InterPro" id="IPR024937">
    <property type="entry name" value="Domain_X"/>
</dbReference>
<dbReference type="InterPro" id="IPR002866">
    <property type="entry name" value="Maturase_MatK"/>
</dbReference>
<dbReference type="InterPro" id="IPR024942">
    <property type="entry name" value="Maturase_MatK_N"/>
</dbReference>
<dbReference type="PANTHER" id="PTHR34811">
    <property type="entry name" value="MATURASE K"/>
    <property type="match status" value="1"/>
</dbReference>
<dbReference type="PANTHER" id="PTHR34811:SF1">
    <property type="entry name" value="MATURASE K"/>
    <property type="match status" value="1"/>
</dbReference>
<dbReference type="Pfam" id="PF01348">
    <property type="entry name" value="Intron_maturas2"/>
    <property type="match status" value="1"/>
</dbReference>
<dbReference type="Pfam" id="PF01824">
    <property type="entry name" value="MatK_N"/>
    <property type="match status" value="1"/>
</dbReference>
<accession>Q8HQS7</accession>
<comment type="function">
    <text evidence="1">Usually encoded in the trnK tRNA gene intron. Probably assists in splicing its own and other chloroplast group II introns.</text>
</comment>
<comment type="subcellular location">
    <subcellularLocation>
        <location>Plastid</location>
        <location>Chloroplast</location>
    </subcellularLocation>
</comment>
<comment type="similarity">
    <text evidence="1">Belongs to the intron maturase 2 family. MatK subfamily.</text>
</comment>